<organism>
    <name type="scientific">Candida glabrata (strain ATCC 2001 / BCRC 20586 / JCM 3761 / NBRC 0622 / NRRL Y-65 / CBS 138)</name>
    <name type="common">Yeast</name>
    <name type="synonym">Nakaseomyces glabratus</name>
    <dbReference type="NCBI Taxonomy" id="284593"/>
    <lineage>
        <taxon>Eukaryota</taxon>
        <taxon>Fungi</taxon>
        <taxon>Dikarya</taxon>
        <taxon>Ascomycota</taxon>
        <taxon>Saccharomycotina</taxon>
        <taxon>Saccharomycetes</taxon>
        <taxon>Saccharomycetales</taxon>
        <taxon>Saccharomycetaceae</taxon>
        <taxon>Nakaseomyces</taxon>
    </lineage>
</organism>
<dbReference type="EC" id="3.6.1.1"/>
<dbReference type="EMBL" id="CR380954">
    <property type="protein sequence ID" value="CAG60160.1"/>
    <property type="molecule type" value="Genomic_DNA"/>
</dbReference>
<dbReference type="RefSeq" id="XP_447227.1">
    <property type="nucleotide sequence ID" value="XM_447227.1"/>
</dbReference>
<dbReference type="SMR" id="Q6FRB7"/>
<dbReference type="FunCoup" id="Q6FRB7">
    <property type="interactions" value="1123"/>
</dbReference>
<dbReference type="STRING" id="284593.Q6FRB7"/>
<dbReference type="EnsemblFungi" id="CAGL0H09878g-T">
    <property type="protein sequence ID" value="CAGL0H09878g-T-p1"/>
    <property type="gene ID" value="CAGL0H09878g"/>
</dbReference>
<dbReference type="GeneID" id="2888731"/>
<dbReference type="KEGG" id="cgr:2888731"/>
<dbReference type="CGD" id="CAL0131448">
    <property type="gene designation" value="IPP1"/>
</dbReference>
<dbReference type="VEuPathDB" id="FungiDB:B1J91_H09878g"/>
<dbReference type="VEuPathDB" id="FungiDB:CAGL0H09878g"/>
<dbReference type="eggNOG" id="KOG1626">
    <property type="taxonomic scope" value="Eukaryota"/>
</dbReference>
<dbReference type="HOGENOM" id="CLU_040684_0_2_1"/>
<dbReference type="InParanoid" id="Q6FRB7"/>
<dbReference type="OMA" id="LYANEQK"/>
<dbReference type="Proteomes" id="UP000002428">
    <property type="component" value="Chromosome H"/>
</dbReference>
<dbReference type="GO" id="GO:0009986">
    <property type="term" value="C:cell surface"/>
    <property type="evidence" value="ECO:0000314"/>
    <property type="project" value="CGD"/>
</dbReference>
<dbReference type="GO" id="GO:0005829">
    <property type="term" value="C:cytosol"/>
    <property type="evidence" value="ECO:0000314"/>
    <property type="project" value="CGD"/>
</dbReference>
<dbReference type="GO" id="GO:0004427">
    <property type="term" value="F:inorganic diphosphate phosphatase activity"/>
    <property type="evidence" value="ECO:0007669"/>
    <property type="project" value="UniProtKB-EC"/>
</dbReference>
<dbReference type="GO" id="GO:0000287">
    <property type="term" value="F:magnesium ion binding"/>
    <property type="evidence" value="ECO:0007669"/>
    <property type="project" value="InterPro"/>
</dbReference>
<dbReference type="GO" id="GO:0006796">
    <property type="term" value="P:phosphate-containing compound metabolic process"/>
    <property type="evidence" value="ECO:0007669"/>
    <property type="project" value="InterPro"/>
</dbReference>
<dbReference type="CDD" id="cd00412">
    <property type="entry name" value="pyrophosphatase"/>
    <property type="match status" value="1"/>
</dbReference>
<dbReference type="FunFam" id="3.90.80.10:FF:000004">
    <property type="entry name" value="Inorganic pyrophosphatase"/>
    <property type="match status" value="1"/>
</dbReference>
<dbReference type="Gene3D" id="3.90.80.10">
    <property type="entry name" value="Inorganic pyrophosphatase"/>
    <property type="match status" value="1"/>
</dbReference>
<dbReference type="InterPro" id="IPR008162">
    <property type="entry name" value="Pyrophosphatase"/>
</dbReference>
<dbReference type="InterPro" id="IPR036649">
    <property type="entry name" value="Pyrophosphatase_sf"/>
</dbReference>
<dbReference type="PANTHER" id="PTHR10286">
    <property type="entry name" value="INORGANIC PYROPHOSPHATASE"/>
    <property type="match status" value="1"/>
</dbReference>
<dbReference type="Pfam" id="PF00719">
    <property type="entry name" value="Pyrophosphatase"/>
    <property type="match status" value="1"/>
</dbReference>
<dbReference type="SUPFAM" id="SSF50324">
    <property type="entry name" value="Inorganic pyrophosphatase"/>
    <property type="match status" value="1"/>
</dbReference>
<dbReference type="PROSITE" id="PS00387">
    <property type="entry name" value="PPASE"/>
    <property type="match status" value="1"/>
</dbReference>
<evidence type="ECO:0000250" key="1"/>
<evidence type="ECO:0000305" key="2"/>
<feature type="chain" id="PRO_0000137581" description="Inorganic pyrophosphatase">
    <location>
        <begin position="1"/>
        <end position="287"/>
    </location>
</feature>
<feature type="binding site" evidence="1">
    <location>
        <position position="79"/>
    </location>
    <ligand>
        <name>diphosphate</name>
        <dbReference type="ChEBI" id="CHEBI:33019"/>
    </ligand>
</feature>
<feature type="binding site" evidence="1">
    <location>
        <position position="116"/>
    </location>
    <ligand>
        <name>Mg(2+)</name>
        <dbReference type="ChEBI" id="CHEBI:18420"/>
        <label>1</label>
    </ligand>
</feature>
<feature type="binding site" evidence="1">
    <location>
        <position position="121"/>
    </location>
    <ligand>
        <name>Mg(2+)</name>
        <dbReference type="ChEBI" id="CHEBI:18420"/>
        <label>1</label>
    </ligand>
</feature>
<feature type="binding site" evidence="1">
    <location>
        <position position="121"/>
    </location>
    <ligand>
        <name>Mg(2+)</name>
        <dbReference type="ChEBI" id="CHEBI:18420"/>
        <label>2</label>
    </ligand>
</feature>
<feature type="binding site" evidence="1">
    <location>
        <position position="153"/>
    </location>
    <ligand>
        <name>Mg(2+)</name>
        <dbReference type="ChEBI" id="CHEBI:18420"/>
        <label>1</label>
    </ligand>
</feature>
<sequence length="287" mass="32313">MVYTTRQIGAKNTLDYKVFIEEDGKPVSPFHDIPLYADKEENIFNMVVEIPRWTNAKLEITKEETLNPIIQDTKKGKLRYVRNCFPHHGYIHNYGAFPQTWEDPNQTHPETKAVGDNDPVDVLEIGETIGYTGQVKQVKVLGIMALLDEGETDWKVIAIDINDPLAPKLNDIEDVEKYFPGLLRATNEWFRIYKIPDGKPENQFAFSGEAKNKKYALDIIKETNESWKQLIAGKSTDSKDIALENTKVTDSPYYSASAASAIPAAAPQADAPIDKSVDKWFFISGSA</sequence>
<comment type="catalytic activity">
    <reaction>
        <text>diphosphate + H2O = 2 phosphate + H(+)</text>
        <dbReference type="Rhea" id="RHEA:24576"/>
        <dbReference type="ChEBI" id="CHEBI:15377"/>
        <dbReference type="ChEBI" id="CHEBI:15378"/>
        <dbReference type="ChEBI" id="CHEBI:33019"/>
        <dbReference type="ChEBI" id="CHEBI:43474"/>
        <dbReference type="EC" id="3.6.1.1"/>
    </reaction>
</comment>
<comment type="cofactor">
    <cofactor evidence="1">
        <name>Mg(2+)</name>
        <dbReference type="ChEBI" id="CHEBI:18420"/>
    </cofactor>
</comment>
<comment type="subcellular location">
    <subcellularLocation>
        <location evidence="1">Cytoplasm</location>
    </subcellularLocation>
</comment>
<comment type="similarity">
    <text evidence="2">Belongs to the PPase family.</text>
</comment>
<proteinExistence type="inferred from homology"/>
<accession>Q6FRB7</accession>
<reference key="1">
    <citation type="journal article" date="2004" name="Nature">
        <title>Genome evolution in yeasts.</title>
        <authorList>
            <person name="Dujon B."/>
            <person name="Sherman D."/>
            <person name="Fischer G."/>
            <person name="Durrens P."/>
            <person name="Casaregola S."/>
            <person name="Lafontaine I."/>
            <person name="de Montigny J."/>
            <person name="Marck C."/>
            <person name="Neuveglise C."/>
            <person name="Talla E."/>
            <person name="Goffard N."/>
            <person name="Frangeul L."/>
            <person name="Aigle M."/>
            <person name="Anthouard V."/>
            <person name="Babour A."/>
            <person name="Barbe V."/>
            <person name="Barnay S."/>
            <person name="Blanchin S."/>
            <person name="Beckerich J.-M."/>
            <person name="Beyne E."/>
            <person name="Bleykasten C."/>
            <person name="Boisrame A."/>
            <person name="Boyer J."/>
            <person name="Cattolico L."/>
            <person name="Confanioleri F."/>
            <person name="de Daruvar A."/>
            <person name="Despons L."/>
            <person name="Fabre E."/>
            <person name="Fairhead C."/>
            <person name="Ferry-Dumazet H."/>
            <person name="Groppi A."/>
            <person name="Hantraye F."/>
            <person name="Hennequin C."/>
            <person name="Jauniaux N."/>
            <person name="Joyet P."/>
            <person name="Kachouri R."/>
            <person name="Kerrest A."/>
            <person name="Koszul R."/>
            <person name="Lemaire M."/>
            <person name="Lesur I."/>
            <person name="Ma L."/>
            <person name="Muller H."/>
            <person name="Nicaud J.-M."/>
            <person name="Nikolski M."/>
            <person name="Oztas S."/>
            <person name="Ozier-Kalogeropoulos O."/>
            <person name="Pellenz S."/>
            <person name="Potier S."/>
            <person name="Richard G.-F."/>
            <person name="Straub M.-L."/>
            <person name="Suleau A."/>
            <person name="Swennen D."/>
            <person name="Tekaia F."/>
            <person name="Wesolowski-Louvel M."/>
            <person name="Westhof E."/>
            <person name="Wirth B."/>
            <person name="Zeniou-Meyer M."/>
            <person name="Zivanovic Y."/>
            <person name="Bolotin-Fukuhara M."/>
            <person name="Thierry A."/>
            <person name="Bouchier C."/>
            <person name="Caudron B."/>
            <person name="Scarpelli C."/>
            <person name="Gaillardin C."/>
            <person name="Weissenbach J."/>
            <person name="Wincker P."/>
            <person name="Souciet J.-L."/>
        </authorList>
    </citation>
    <scope>NUCLEOTIDE SEQUENCE [LARGE SCALE GENOMIC DNA]</scope>
    <source>
        <strain>ATCC 2001 / BCRC 20586 / JCM 3761 / NBRC 0622 / NRRL Y-65 / CBS 138</strain>
    </source>
</reference>
<keyword id="KW-0963">Cytoplasm</keyword>
<keyword id="KW-0378">Hydrolase</keyword>
<keyword id="KW-0460">Magnesium</keyword>
<keyword id="KW-0479">Metal-binding</keyword>
<keyword id="KW-1185">Reference proteome</keyword>
<gene>
    <name type="primary">IPP1</name>
    <name type="ordered locus">CAGL0H09878g</name>
</gene>
<protein>
    <recommendedName>
        <fullName>Inorganic pyrophosphatase</fullName>
        <ecNumber>3.6.1.1</ecNumber>
    </recommendedName>
    <alternativeName>
        <fullName>Pyrophosphate phospho-hydrolase</fullName>
        <shortName>PPase</shortName>
    </alternativeName>
</protein>
<name>IPYR_CANGA</name>